<dbReference type="EC" id="7.6.2.10" evidence="1"/>
<dbReference type="EMBL" id="AL591985">
    <property type="protein sequence ID" value="CAC48805.1"/>
    <property type="molecule type" value="Genomic_DNA"/>
</dbReference>
<dbReference type="PIR" id="E95892">
    <property type="entry name" value="E95892"/>
</dbReference>
<dbReference type="RefSeq" id="NP_436945.1">
    <property type="nucleotide sequence ID" value="NC_003078.1"/>
</dbReference>
<dbReference type="RefSeq" id="WP_010975293.1">
    <property type="nucleotide sequence ID" value="NC_003078.1"/>
</dbReference>
<dbReference type="SMR" id="Q92WD6"/>
<dbReference type="EnsemblBacteria" id="CAC48805">
    <property type="protein sequence ID" value="CAC48805"/>
    <property type="gene ID" value="SM_b20419"/>
</dbReference>
<dbReference type="GeneID" id="25012751"/>
<dbReference type="KEGG" id="sme:SM_b20419"/>
<dbReference type="PATRIC" id="fig|266834.11.peg.5334"/>
<dbReference type="eggNOG" id="COG3842">
    <property type="taxonomic scope" value="Bacteria"/>
</dbReference>
<dbReference type="HOGENOM" id="CLU_000604_1_1_5"/>
<dbReference type="OrthoDB" id="394852at2"/>
<dbReference type="PRO" id="PR:Q92WD6"/>
<dbReference type="Proteomes" id="UP000001976">
    <property type="component" value="Plasmid pSymB"/>
</dbReference>
<dbReference type="GO" id="GO:0055052">
    <property type="term" value="C:ATP-binding cassette (ABC) transporter complex, substrate-binding subunit-containing"/>
    <property type="evidence" value="ECO:0007669"/>
    <property type="project" value="TreeGrafter"/>
</dbReference>
<dbReference type="GO" id="GO:0015430">
    <property type="term" value="F:ABC-type glycerol-3-phosphate transporter activity"/>
    <property type="evidence" value="ECO:0007669"/>
    <property type="project" value="UniProtKB-EC"/>
</dbReference>
<dbReference type="GO" id="GO:0005524">
    <property type="term" value="F:ATP binding"/>
    <property type="evidence" value="ECO:0007669"/>
    <property type="project" value="UniProtKB-KW"/>
</dbReference>
<dbReference type="GO" id="GO:0016887">
    <property type="term" value="F:ATP hydrolysis activity"/>
    <property type="evidence" value="ECO:0007669"/>
    <property type="project" value="InterPro"/>
</dbReference>
<dbReference type="GO" id="GO:0008643">
    <property type="term" value="P:carbohydrate transport"/>
    <property type="evidence" value="ECO:0007669"/>
    <property type="project" value="InterPro"/>
</dbReference>
<dbReference type="GO" id="GO:0001407">
    <property type="term" value="P:glycerophosphodiester transmembrane transport"/>
    <property type="evidence" value="ECO:0007669"/>
    <property type="project" value="TreeGrafter"/>
</dbReference>
<dbReference type="CDD" id="cd03301">
    <property type="entry name" value="ABC_MalK_N"/>
    <property type="match status" value="1"/>
</dbReference>
<dbReference type="FunFam" id="3.40.50.300:FF:000042">
    <property type="entry name" value="Maltose/maltodextrin ABC transporter, ATP-binding protein"/>
    <property type="match status" value="1"/>
</dbReference>
<dbReference type="Gene3D" id="2.40.50.100">
    <property type="match status" value="1"/>
</dbReference>
<dbReference type="Gene3D" id="2.40.50.140">
    <property type="entry name" value="Nucleic acid-binding proteins"/>
    <property type="match status" value="1"/>
</dbReference>
<dbReference type="Gene3D" id="3.40.50.300">
    <property type="entry name" value="P-loop containing nucleotide triphosphate hydrolases"/>
    <property type="match status" value="1"/>
</dbReference>
<dbReference type="InterPro" id="IPR003593">
    <property type="entry name" value="AAA+_ATPase"/>
</dbReference>
<dbReference type="InterPro" id="IPR003439">
    <property type="entry name" value="ABC_transporter-like_ATP-bd"/>
</dbReference>
<dbReference type="InterPro" id="IPR017871">
    <property type="entry name" value="ABC_transporter-like_CS"/>
</dbReference>
<dbReference type="InterPro" id="IPR015855">
    <property type="entry name" value="ABC_transpr_MalK-like"/>
</dbReference>
<dbReference type="InterPro" id="IPR047641">
    <property type="entry name" value="ABC_transpr_MalK/UgpC-like"/>
</dbReference>
<dbReference type="InterPro" id="IPR008995">
    <property type="entry name" value="Mo/tungstate-bd_C_term_dom"/>
</dbReference>
<dbReference type="InterPro" id="IPR012340">
    <property type="entry name" value="NA-bd_OB-fold"/>
</dbReference>
<dbReference type="InterPro" id="IPR027417">
    <property type="entry name" value="P-loop_NTPase"/>
</dbReference>
<dbReference type="InterPro" id="IPR013611">
    <property type="entry name" value="Transp-assoc_OB_typ2"/>
</dbReference>
<dbReference type="NCBIfam" id="NF008653">
    <property type="entry name" value="PRK11650.1"/>
    <property type="match status" value="1"/>
</dbReference>
<dbReference type="PANTHER" id="PTHR43875">
    <property type="entry name" value="MALTODEXTRIN IMPORT ATP-BINDING PROTEIN MSMX"/>
    <property type="match status" value="1"/>
</dbReference>
<dbReference type="PANTHER" id="PTHR43875:SF12">
    <property type="entry name" value="SN-GLYCEROL-3-PHOSPHATE IMPORT ATP-BINDING PROTEIN UGPC"/>
    <property type="match status" value="1"/>
</dbReference>
<dbReference type="Pfam" id="PF00005">
    <property type="entry name" value="ABC_tran"/>
    <property type="match status" value="1"/>
</dbReference>
<dbReference type="Pfam" id="PF08402">
    <property type="entry name" value="TOBE_2"/>
    <property type="match status" value="1"/>
</dbReference>
<dbReference type="SMART" id="SM00382">
    <property type="entry name" value="AAA"/>
    <property type="match status" value="1"/>
</dbReference>
<dbReference type="SUPFAM" id="SSF50331">
    <property type="entry name" value="MOP-like"/>
    <property type="match status" value="1"/>
</dbReference>
<dbReference type="SUPFAM" id="SSF52540">
    <property type="entry name" value="P-loop containing nucleoside triphosphate hydrolases"/>
    <property type="match status" value="1"/>
</dbReference>
<dbReference type="PROSITE" id="PS00211">
    <property type="entry name" value="ABC_TRANSPORTER_1"/>
    <property type="match status" value="1"/>
</dbReference>
<dbReference type="PROSITE" id="PS50893">
    <property type="entry name" value="ABC_TRANSPORTER_2"/>
    <property type="match status" value="1"/>
</dbReference>
<dbReference type="PROSITE" id="PS51315">
    <property type="entry name" value="UGPC"/>
    <property type="match status" value="1"/>
</dbReference>
<name>UGPC_RHIME</name>
<reference key="1">
    <citation type="journal article" date="2001" name="Proc. Natl. Acad. Sci. U.S.A.">
        <title>The complete sequence of the 1,683-kb pSymB megaplasmid from the N2-fixing endosymbiont Sinorhizobium meliloti.</title>
        <authorList>
            <person name="Finan T.M."/>
            <person name="Weidner S."/>
            <person name="Wong K."/>
            <person name="Buhrmester J."/>
            <person name="Chain P."/>
            <person name="Vorhoelter F.J."/>
            <person name="Hernandez-Lucas I."/>
            <person name="Becker A."/>
            <person name="Cowie A."/>
            <person name="Gouzy J."/>
            <person name="Golding B."/>
            <person name="Puehler A."/>
        </authorList>
    </citation>
    <scope>NUCLEOTIDE SEQUENCE [LARGE SCALE GENOMIC DNA]</scope>
    <source>
        <strain>1021</strain>
    </source>
</reference>
<reference key="2">
    <citation type="journal article" date="2001" name="Science">
        <title>The composite genome of the legume symbiont Sinorhizobium meliloti.</title>
        <authorList>
            <person name="Galibert F."/>
            <person name="Finan T.M."/>
            <person name="Long S.R."/>
            <person name="Puehler A."/>
            <person name="Abola P."/>
            <person name="Ampe F."/>
            <person name="Barloy-Hubler F."/>
            <person name="Barnett M.J."/>
            <person name="Becker A."/>
            <person name="Boistard P."/>
            <person name="Bothe G."/>
            <person name="Boutry M."/>
            <person name="Bowser L."/>
            <person name="Buhrmester J."/>
            <person name="Cadieu E."/>
            <person name="Capela D."/>
            <person name="Chain P."/>
            <person name="Cowie A."/>
            <person name="Davis R.W."/>
            <person name="Dreano S."/>
            <person name="Federspiel N.A."/>
            <person name="Fisher R.F."/>
            <person name="Gloux S."/>
            <person name="Godrie T."/>
            <person name="Goffeau A."/>
            <person name="Golding B."/>
            <person name="Gouzy J."/>
            <person name="Gurjal M."/>
            <person name="Hernandez-Lucas I."/>
            <person name="Hong A."/>
            <person name="Huizar L."/>
            <person name="Hyman R.W."/>
            <person name="Jones T."/>
            <person name="Kahn D."/>
            <person name="Kahn M.L."/>
            <person name="Kalman S."/>
            <person name="Keating D.H."/>
            <person name="Kiss E."/>
            <person name="Komp C."/>
            <person name="Lelaure V."/>
            <person name="Masuy D."/>
            <person name="Palm C."/>
            <person name="Peck M.C."/>
            <person name="Pohl T.M."/>
            <person name="Portetelle D."/>
            <person name="Purnelle B."/>
            <person name="Ramsperger U."/>
            <person name="Surzycki R."/>
            <person name="Thebault P."/>
            <person name="Vandenbol M."/>
            <person name="Vorhoelter F.J."/>
            <person name="Weidner S."/>
            <person name="Wells D.H."/>
            <person name="Wong K."/>
            <person name="Yeh K.-C."/>
            <person name="Batut J."/>
        </authorList>
    </citation>
    <scope>NUCLEOTIDE SEQUENCE [LARGE SCALE GENOMIC DNA]</scope>
    <source>
        <strain>1021</strain>
    </source>
</reference>
<geneLocation type="plasmid">
    <name>pSymB</name>
    <name>megaplasmid 2</name>
</geneLocation>
<gene>
    <name evidence="1" type="primary">ugpC</name>
    <name type="ordered locus">RB0405</name>
    <name type="ORF">SMb20419</name>
</gene>
<organism>
    <name type="scientific">Rhizobium meliloti (strain 1021)</name>
    <name type="common">Ensifer meliloti</name>
    <name type="synonym">Sinorhizobium meliloti</name>
    <dbReference type="NCBI Taxonomy" id="266834"/>
    <lineage>
        <taxon>Bacteria</taxon>
        <taxon>Pseudomonadati</taxon>
        <taxon>Pseudomonadota</taxon>
        <taxon>Alphaproteobacteria</taxon>
        <taxon>Hyphomicrobiales</taxon>
        <taxon>Rhizobiaceae</taxon>
        <taxon>Sinorhizobium/Ensifer group</taxon>
        <taxon>Sinorhizobium</taxon>
    </lineage>
</organism>
<sequence length="349" mass="37854">MATITLKDVHKTYHGDIAAIRGVSLAIADGEFIVLVGPSGCGKSTLLRMIAGLESITSGEISIGDRVVNGLEPSERDIAMVFQNYALYPHMTVRQNLSYGLKNRNTPKEEIERRIAKAAKSLEIEPFLDRKPRQLSGGQRQRVAMGRAIVREPAAFLFDEPLSNLDAKLRVQMRVEIKRLQRALGTTSVYVTHDQLEAMTLADRLVVLNGGRIEQVGTPIELYENPATAFVATFIGSPSMNLLDLNTGNAAWSAPAALVGKPGLATIGIRPEDITLAGDTDGGERFRARVRVGAVELVGAESYVHGTLANGEPLVFRVAGRSRMMIDEEVEVAAVAGSLHWFDAAGRRL</sequence>
<proteinExistence type="inferred from homology"/>
<evidence type="ECO:0000255" key="1">
    <source>
        <dbReference type="HAMAP-Rule" id="MF_01727"/>
    </source>
</evidence>
<comment type="function">
    <text evidence="1">Part of the ABC transporter complex UgpBAEC involved in sn-glycerol-3-phosphate (G3P) import. Responsible for energy coupling to the transport system.</text>
</comment>
<comment type="catalytic activity">
    <reaction evidence="1">
        <text>sn-glycerol 3-phosphate(out) + ATP + H2O = sn-glycerol 3-phosphate(in) + ADP + phosphate + H(+)</text>
        <dbReference type="Rhea" id="RHEA:21668"/>
        <dbReference type="ChEBI" id="CHEBI:15377"/>
        <dbReference type="ChEBI" id="CHEBI:15378"/>
        <dbReference type="ChEBI" id="CHEBI:30616"/>
        <dbReference type="ChEBI" id="CHEBI:43474"/>
        <dbReference type="ChEBI" id="CHEBI:57597"/>
        <dbReference type="ChEBI" id="CHEBI:456216"/>
        <dbReference type="EC" id="7.6.2.10"/>
    </reaction>
</comment>
<comment type="subunit">
    <text evidence="1">The complex is composed of two ATP-binding proteins (UgpC), two transmembrane proteins (UgpA and UgpE) and a solute-binding protein (UgpB).</text>
</comment>
<comment type="subcellular location">
    <subcellularLocation>
        <location evidence="1">Cell inner membrane</location>
        <topology evidence="1">Peripheral membrane protein</topology>
    </subcellularLocation>
</comment>
<comment type="similarity">
    <text evidence="1">Belongs to the ABC transporter superfamily. sn-glycerol-3-phosphate importer (TC 3.A.1.1.3) family.</text>
</comment>
<protein>
    <recommendedName>
        <fullName evidence="1">sn-glycerol-3-phosphate import ATP-binding protein UgpC</fullName>
        <ecNumber evidence="1">7.6.2.10</ecNumber>
    </recommendedName>
</protein>
<keyword id="KW-0067">ATP-binding</keyword>
<keyword id="KW-0997">Cell inner membrane</keyword>
<keyword id="KW-1003">Cell membrane</keyword>
<keyword id="KW-0472">Membrane</keyword>
<keyword id="KW-0547">Nucleotide-binding</keyword>
<keyword id="KW-0614">Plasmid</keyword>
<keyword id="KW-1185">Reference proteome</keyword>
<keyword id="KW-0762">Sugar transport</keyword>
<keyword id="KW-1278">Translocase</keyword>
<keyword id="KW-0813">Transport</keyword>
<feature type="chain" id="PRO_0000289769" description="sn-glycerol-3-phosphate import ATP-binding protein UgpC">
    <location>
        <begin position="1"/>
        <end position="349"/>
    </location>
</feature>
<feature type="domain" description="ABC transporter" evidence="1">
    <location>
        <begin position="4"/>
        <end position="235"/>
    </location>
</feature>
<feature type="binding site" evidence="1">
    <location>
        <begin position="37"/>
        <end position="44"/>
    </location>
    <ligand>
        <name>ATP</name>
        <dbReference type="ChEBI" id="CHEBI:30616"/>
    </ligand>
</feature>
<accession>Q92WD6</accession>